<name>HYFR_ECOLI</name>
<accession>P71229</accession>
<accession>P76567</accession>
<accession>P76976</accession>
<accession>P76977</accession>
<organism>
    <name type="scientific">Escherichia coli (strain K12)</name>
    <dbReference type="NCBI Taxonomy" id="83333"/>
    <lineage>
        <taxon>Bacteria</taxon>
        <taxon>Pseudomonadati</taxon>
        <taxon>Pseudomonadota</taxon>
        <taxon>Gammaproteobacteria</taxon>
        <taxon>Enterobacterales</taxon>
        <taxon>Enterobacteriaceae</taxon>
        <taxon>Escherichia</taxon>
    </lineage>
</organism>
<feature type="chain" id="PRO_0000081299" description="DNA-binding transcriptional activator HyfR">
    <location>
        <begin position="1"/>
        <end position="670"/>
    </location>
</feature>
<feature type="domain" description="GAF">
    <location>
        <begin position="169"/>
        <end position="311"/>
    </location>
</feature>
<feature type="domain" description="Sigma-54 factor interaction" evidence="2">
    <location>
        <begin position="347"/>
        <end position="576"/>
    </location>
</feature>
<feature type="DNA-binding region" description="H-T-H motif" evidence="1">
    <location>
        <begin position="641"/>
        <end position="660"/>
    </location>
</feature>
<feature type="short sequence motif" description="Cys-rich segment, might bind a metal cluster" evidence="7">
    <location>
        <begin position="207"/>
        <end position="221"/>
    </location>
</feature>
<feature type="binding site" evidence="2">
    <location>
        <begin position="375"/>
        <end position="382"/>
    </location>
    <ligand>
        <name>ATP</name>
        <dbReference type="ChEBI" id="CHEBI:30616"/>
    </ligand>
</feature>
<feature type="binding site" evidence="2">
    <location>
        <begin position="438"/>
        <end position="447"/>
    </location>
    <ligand>
        <name>ATP</name>
        <dbReference type="ChEBI" id="CHEBI:30616"/>
    </ligand>
</feature>
<evidence type="ECO:0000250" key="1"/>
<evidence type="ECO:0000255" key="2">
    <source>
        <dbReference type="PROSITE-ProRule" id="PRU00193"/>
    </source>
</evidence>
<evidence type="ECO:0000269" key="3">
    <source>
    </source>
</evidence>
<evidence type="ECO:0000269" key="4">
    <source>
    </source>
</evidence>
<evidence type="ECO:0000303" key="5">
    <source>
    </source>
</evidence>
<evidence type="ECO:0000303" key="6">
    <source>
    </source>
</evidence>
<evidence type="ECO:0000305" key="7">
    <source>
    </source>
</evidence>
<sequence length="670" mass="75305">MAMSDEAMFAPPQGITIEAVNGMLAERLAQKHGKASLLRAFIPLPPPFSPVQLIELHVLKSNFYYRYHDDGSDVTATTEYQGEMVDYSRHAVLLGSSGMAELRFIRTHGSRFTSQDCTLFNWLARIITPVLQSWLNDEEQQVALRLLEKDRDHHRVLVDITNAVLSHLDLDDLIADVAREIHHFFGLASVSMVLGDHRKNEKFSLWCSDLSASHCACLPRCMPGESVLLTQTLQTRQPTLTHRADDLFLWQRDPLLLLLASNGCESALLIPLTFGNHTPGALLLAHTSSTLFSEENCQLLQHIADRIAIAVGNADAWRSMTDLQESLQQENHQLSEQLLSNLGIGDIIYQSQAMEDLLQQVDIVAKSDSTVLICGETGTGKEVIARAIHQLSPRRDKPLVKINCAAIPASLLESELFGHDKGAFTGAINTHRGRFEIADGGTLFLDEIGDLPLELQPKLLRVLQEREIERLGGSRTIPVNVRVIAATNRDLWQMVEDRQFRSDLFYRLNVFPLELPPLRDRPEDIPLLAKHFTQKMARHMNRAIDAIPTEALRQLMSWDWPGNVRELENVIERAVLLTRGNSLNLHLNVRQSRLLPTLNEDSALRSSMAQLLHPTTPENDEEERQRIVQVLRETNGIVAGPRGAATRLGMKRTTLLSRMQRLGISVREVL</sequence>
<keyword id="KW-0010">Activator</keyword>
<keyword id="KW-0067">ATP-binding</keyword>
<keyword id="KW-0238">DNA-binding</keyword>
<keyword id="KW-0547">Nucleotide-binding</keyword>
<keyword id="KW-1185">Reference proteome</keyword>
<keyword id="KW-0804">Transcription</keyword>
<keyword id="KW-0805">Transcription regulation</keyword>
<keyword id="KW-0902">Two-component regulatory system</keyword>
<gene>
    <name evidence="6" type="primary">hyfR</name>
    <name type="ordered locus">b2491</name>
    <name type="ordered locus">JW2476</name>
</gene>
<comment type="function">
    <text evidence="3 4 7">A transcriptional activator of its own operon; when overexpressed operon expression is strongly enhanced by low pH (under pH 6.0), strongly inhibited by O(2) but only weakly stimulated by fumarate (PubMed:12426353, PubMed:14702328). Expression in situ is very weak (PubMed:12426353, PubMed:14702328).</text>
</comment>
<comment type="induction">
    <text evidence="3">Induced during anaerobic growth in the presence of formate; part of a hyfR-focB transcript, it is not clear where the hyfR promoter is located, nor if the upstream operon (hyfABCDEFGHIJ) includes these last 2 genes.</text>
</comment>
<comment type="domain">
    <text evidence="7">A Cys-rich motif in the N-terminus (residues 207-221) may bind a metal cofactor or iron-sulfur cluster and be responsible for sensing redox or other signals.</text>
</comment>
<comment type="disruption phenotype">
    <text evidence="3">No effect on expression of the hyf operon.</text>
</comment>
<protein>
    <recommendedName>
        <fullName>DNA-binding transcriptional activator HyfR</fullName>
    </recommendedName>
    <alternativeName>
        <fullName evidence="5">Hydrogenase-4 transcriptional activator</fullName>
    </alternativeName>
</protein>
<proteinExistence type="evidence at protein level"/>
<dbReference type="EMBL" id="M63654">
    <property type="protein sequence ID" value="AAB88573.1"/>
    <property type="molecule type" value="Genomic_DNA"/>
</dbReference>
<dbReference type="EMBL" id="U00096">
    <property type="protein sequence ID" value="AAC75544.2"/>
    <property type="molecule type" value="Genomic_DNA"/>
</dbReference>
<dbReference type="EMBL" id="AP009048">
    <property type="protein sequence ID" value="BAA16380.2"/>
    <property type="molecule type" value="Genomic_DNA"/>
</dbReference>
<dbReference type="PIR" id="B65025">
    <property type="entry name" value="B65025"/>
</dbReference>
<dbReference type="RefSeq" id="NP_416986.4">
    <property type="nucleotide sequence ID" value="NC_000913.3"/>
</dbReference>
<dbReference type="RefSeq" id="WP_001251544.1">
    <property type="nucleotide sequence ID" value="NZ_LN832404.1"/>
</dbReference>
<dbReference type="SMR" id="P71229"/>
<dbReference type="BioGRID" id="4261431">
    <property type="interactions" value="107"/>
</dbReference>
<dbReference type="BioGRID" id="853163">
    <property type="interactions" value="2"/>
</dbReference>
<dbReference type="DIP" id="DIP-9993N"/>
<dbReference type="FunCoup" id="P71229">
    <property type="interactions" value="362"/>
</dbReference>
<dbReference type="IntAct" id="P71229">
    <property type="interactions" value="13"/>
</dbReference>
<dbReference type="STRING" id="511145.b2491"/>
<dbReference type="PaxDb" id="511145-b2491"/>
<dbReference type="EnsemblBacteria" id="AAC75544">
    <property type="protein sequence ID" value="AAC75544"/>
    <property type="gene ID" value="b2491"/>
</dbReference>
<dbReference type="GeneID" id="948886"/>
<dbReference type="KEGG" id="ecj:JW2476"/>
<dbReference type="KEGG" id="eco:b2491"/>
<dbReference type="KEGG" id="ecoc:C3026_13820"/>
<dbReference type="PATRIC" id="fig|1411691.4.peg.4248"/>
<dbReference type="EchoBASE" id="EB3971"/>
<dbReference type="eggNOG" id="COG3604">
    <property type="taxonomic scope" value="Bacteria"/>
</dbReference>
<dbReference type="InParanoid" id="P71229"/>
<dbReference type="OMA" id="HCACLPH"/>
<dbReference type="OrthoDB" id="9804019at2"/>
<dbReference type="PhylomeDB" id="P71229"/>
<dbReference type="BioCyc" id="EcoCyc:G7308-MONOMER"/>
<dbReference type="PRO" id="PR:P71229"/>
<dbReference type="Proteomes" id="UP000000625">
    <property type="component" value="Chromosome"/>
</dbReference>
<dbReference type="GO" id="GO:0032993">
    <property type="term" value="C:protein-DNA complex"/>
    <property type="evidence" value="ECO:0000318"/>
    <property type="project" value="GO_Central"/>
</dbReference>
<dbReference type="GO" id="GO:0005524">
    <property type="term" value="F:ATP binding"/>
    <property type="evidence" value="ECO:0007669"/>
    <property type="project" value="UniProtKB-KW"/>
</dbReference>
<dbReference type="GO" id="GO:0016887">
    <property type="term" value="F:ATP hydrolysis activity"/>
    <property type="evidence" value="ECO:0007669"/>
    <property type="project" value="InterPro"/>
</dbReference>
<dbReference type="GO" id="GO:0000987">
    <property type="term" value="F:cis-regulatory region sequence-specific DNA binding"/>
    <property type="evidence" value="ECO:0000318"/>
    <property type="project" value="GO_Central"/>
</dbReference>
<dbReference type="GO" id="GO:0003677">
    <property type="term" value="F:DNA binding"/>
    <property type="evidence" value="ECO:0000314"/>
    <property type="project" value="EcoliWiki"/>
</dbReference>
<dbReference type="GO" id="GO:0001216">
    <property type="term" value="F:DNA-binding transcription activator activity"/>
    <property type="evidence" value="ECO:0000318"/>
    <property type="project" value="GO_Central"/>
</dbReference>
<dbReference type="GO" id="GO:0006352">
    <property type="term" value="P:DNA-templated transcription initiation"/>
    <property type="evidence" value="ECO:0000315"/>
    <property type="project" value="EcoliWiki"/>
</dbReference>
<dbReference type="GO" id="GO:0000160">
    <property type="term" value="P:phosphorelay signal transduction system"/>
    <property type="evidence" value="ECO:0007669"/>
    <property type="project" value="UniProtKB-KW"/>
</dbReference>
<dbReference type="GO" id="GO:0045893">
    <property type="term" value="P:positive regulation of DNA-templated transcription"/>
    <property type="evidence" value="ECO:0000318"/>
    <property type="project" value="GO_Central"/>
</dbReference>
<dbReference type="GO" id="GO:2000142">
    <property type="term" value="P:regulation of DNA-templated transcription initiation"/>
    <property type="evidence" value="ECO:0000315"/>
    <property type="project" value="EcoCyc"/>
</dbReference>
<dbReference type="CDD" id="cd00009">
    <property type="entry name" value="AAA"/>
    <property type="match status" value="1"/>
</dbReference>
<dbReference type="FunFam" id="1.10.8.60:FF:000014">
    <property type="entry name" value="DNA-binding transcriptional regulator NtrC"/>
    <property type="match status" value="1"/>
</dbReference>
<dbReference type="FunFam" id="3.40.50.300:FF:000006">
    <property type="entry name" value="DNA-binding transcriptional regulator NtrC"/>
    <property type="match status" value="1"/>
</dbReference>
<dbReference type="Gene3D" id="1.10.8.60">
    <property type="match status" value="1"/>
</dbReference>
<dbReference type="Gene3D" id="3.30.450.40">
    <property type="match status" value="1"/>
</dbReference>
<dbReference type="Gene3D" id="1.10.10.60">
    <property type="entry name" value="Homeodomain-like"/>
    <property type="match status" value="1"/>
</dbReference>
<dbReference type="Gene3D" id="3.40.50.300">
    <property type="entry name" value="P-loop containing nucleotide triphosphate hydrolases"/>
    <property type="match status" value="1"/>
</dbReference>
<dbReference type="InterPro" id="IPR003593">
    <property type="entry name" value="AAA+_ATPase"/>
</dbReference>
<dbReference type="InterPro" id="IPR003018">
    <property type="entry name" value="GAF"/>
</dbReference>
<dbReference type="InterPro" id="IPR029016">
    <property type="entry name" value="GAF-like_dom_sf"/>
</dbReference>
<dbReference type="InterPro" id="IPR009057">
    <property type="entry name" value="Homeodomain-like_sf"/>
</dbReference>
<dbReference type="InterPro" id="IPR027417">
    <property type="entry name" value="P-loop_NTPase"/>
</dbReference>
<dbReference type="InterPro" id="IPR002078">
    <property type="entry name" value="Sigma_54_int"/>
</dbReference>
<dbReference type="InterPro" id="IPR025662">
    <property type="entry name" value="Sigma_54_int_dom_ATP-bd_1"/>
</dbReference>
<dbReference type="InterPro" id="IPR025943">
    <property type="entry name" value="Sigma_54_int_dom_ATP-bd_2"/>
</dbReference>
<dbReference type="InterPro" id="IPR025944">
    <property type="entry name" value="Sigma_54_int_dom_CS"/>
</dbReference>
<dbReference type="PANTHER" id="PTHR32071:SF123">
    <property type="entry name" value="DNA-BINDING TRANSCRIPTIONAL ACTIVATOR HYFR-RELATED"/>
    <property type="match status" value="1"/>
</dbReference>
<dbReference type="PANTHER" id="PTHR32071">
    <property type="entry name" value="TRANSCRIPTIONAL REGULATORY PROTEIN"/>
    <property type="match status" value="1"/>
</dbReference>
<dbReference type="Pfam" id="PF01590">
    <property type="entry name" value="GAF"/>
    <property type="match status" value="1"/>
</dbReference>
<dbReference type="Pfam" id="PF00158">
    <property type="entry name" value="Sigma54_activat"/>
    <property type="match status" value="1"/>
</dbReference>
<dbReference type="SMART" id="SM00382">
    <property type="entry name" value="AAA"/>
    <property type="match status" value="1"/>
</dbReference>
<dbReference type="SMART" id="SM00065">
    <property type="entry name" value="GAF"/>
    <property type="match status" value="1"/>
</dbReference>
<dbReference type="SUPFAM" id="SSF55781">
    <property type="entry name" value="GAF domain-like"/>
    <property type="match status" value="1"/>
</dbReference>
<dbReference type="SUPFAM" id="SSF46689">
    <property type="entry name" value="Homeodomain-like"/>
    <property type="match status" value="1"/>
</dbReference>
<dbReference type="SUPFAM" id="SSF52540">
    <property type="entry name" value="P-loop containing nucleoside triphosphate hydrolases"/>
    <property type="match status" value="1"/>
</dbReference>
<dbReference type="PROSITE" id="PS00675">
    <property type="entry name" value="SIGMA54_INTERACT_1"/>
    <property type="match status" value="1"/>
</dbReference>
<dbReference type="PROSITE" id="PS00676">
    <property type="entry name" value="SIGMA54_INTERACT_2"/>
    <property type="match status" value="1"/>
</dbReference>
<dbReference type="PROSITE" id="PS00688">
    <property type="entry name" value="SIGMA54_INTERACT_3"/>
    <property type="match status" value="1"/>
</dbReference>
<dbReference type="PROSITE" id="PS50045">
    <property type="entry name" value="SIGMA54_INTERACT_4"/>
    <property type="match status" value="1"/>
</dbReference>
<reference key="1">
    <citation type="journal article" date="1997" name="Microbiology">
        <title>A 12-cistron Escherichia coli operon (hyf) encoding a putative proton-translocating formate hydrogenlyase system.</title>
        <authorList>
            <person name="Andrews S.C."/>
            <person name="Berks B.C."/>
            <person name="McClay J."/>
            <person name="Ambler A."/>
            <person name="Quail M.A."/>
            <person name="Golby P."/>
            <person name="Guest J.R."/>
        </authorList>
    </citation>
    <scope>NUCLEOTIDE SEQUENCE [GENOMIC DNA]</scope>
    <scope>POSSIBLE FUNCTION</scope>
    <scope>MOTIF</scope>
    <source>
        <strain>K12</strain>
    </source>
</reference>
<reference key="2">
    <citation type="journal article" date="1997" name="DNA Res.">
        <title>Construction of a contiguous 874-kb sequence of the Escherichia coli-K12 genome corresponding to 50.0-68.8 min on the linkage map and analysis of its sequence features.</title>
        <authorList>
            <person name="Yamamoto Y."/>
            <person name="Aiba H."/>
            <person name="Baba T."/>
            <person name="Hayashi K."/>
            <person name="Inada T."/>
            <person name="Isono K."/>
            <person name="Itoh T."/>
            <person name="Kimura S."/>
            <person name="Kitagawa M."/>
            <person name="Makino K."/>
            <person name="Miki T."/>
            <person name="Mitsuhashi N."/>
            <person name="Mizobuchi K."/>
            <person name="Mori H."/>
            <person name="Nakade S."/>
            <person name="Nakamura Y."/>
            <person name="Nashimoto H."/>
            <person name="Oshima T."/>
            <person name="Oyama S."/>
            <person name="Saito N."/>
            <person name="Sampei G."/>
            <person name="Satoh Y."/>
            <person name="Sivasundaram S."/>
            <person name="Tagami H."/>
            <person name="Takahashi H."/>
            <person name="Takeda J."/>
            <person name="Takemoto K."/>
            <person name="Uehara K."/>
            <person name="Wada C."/>
            <person name="Yamagata S."/>
            <person name="Horiuchi T."/>
        </authorList>
    </citation>
    <scope>NUCLEOTIDE SEQUENCE [LARGE SCALE GENOMIC DNA]</scope>
    <source>
        <strain>K12 / W3110 / ATCC 27325 / DSM 5911</strain>
    </source>
</reference>
<reference key="3">
    <citation type="journal article" date="1997" name="Science">
        <title>The complete genome sequence of Escherichia coli K-12.</title>
        <authorList>
            <person name="Blattner F.R."/>
            <person name="Plunkett G. III"/>
            <person name="Bloch C.A."/>
            <person name="Perna N.T."/>
            <person name="Burland V."/>
            <person name="Riley M."/>
            <person name="Collado-Vides J."/>
            <person name="Glasner J.D."/>
            <person name="Rode C.K."/>
            <person name="Mayhew G.F."/>
            <person name="Gregor J."/>
            <person name="Davis N.W."/>
            <person name="Kirkpatrick H.A."/>
            <person name="Goeden M.A."/>
            <person name="Rose D.J."/>
            <person name="Mau B."/>
            <person name="Shao Y."/>
        </authorList>
    </citation>
    <scope>NUCLEOTIDE SEQUENCE [LARGE SCALE GENOMIC DNA]</scope>
    <source>
        <strain>K12 / MG1655 / ATCC 47076</strain>
    </source>
</reference>
<reference key="4">
    <citation type="journal article" date="2006" name="Mol. Syst. Biol.">
        <title>Highly accurate genome sequences of Escherichia coli K-12 strains MG1655 and W3110.</title>
        <authorList>
            <person name="Hayashi K."/>
            <person name="Morooka N."/>
            <person name="Yamamoto Y."/>
            <person name="Fujita K."/>
            <person name="Isono K."/>
            <person name="Choi S."/>
            <person name="Ohtsubo E."/>
            <person name="Baba T."/>
            <person name="Wanner B.L."/>
            <person name="Mori H."/>
            <person name="Horiuchi T."/>
        </authorList>
    </citation>
    <scope>NUCLEOTIDE SEQUENCE [LARGE SCALE GENOMIC DNA]</scope>
    <source>
        <strain>K12 / W3110 / ATCC 27325 / DSM 5911</strain>
    </source>
</reference>
<reference key="5">
    <citation type="journal article" date="2002" name="J. Bacteriol.">
        <title>Regulation of the hydrogenase-4 operon of Escherichia coli by the sigma(54)-dependent transcriptional activators FhlA and HyfR.</title>
        <authorList>
            <person name="Skibinski D.A."/>
            <person name="Golby P."/>
            <person name="Chang Y.S."/>
            <person name="Sargent F."/>
            <person name="Hoffman R."/>
            <person name="Harper R."/>
            <person name="Guest J.R."/>
            <person name="Attwood M.M."/>
            <person name="Berks B.C."/>
            <person name="Andrews S.C."/>
        </authorList>
    </citation>
    <scope>FUNCTION</scope>
    <scope>DNA-BINDING</scope>
    <scope>INDUCTION</scope>
    <scope>OPERON</scope>
    <scope>DISRUPTION PHENOTYPE</scope>
    <source>
        <strain>K12 / MC4100 / ATCC 35695 / DSM 6574</strain>
    </source>
</reference>
<reference key="6">
    <citation type="journal article" date="2004" name="J. Bacteriol.">
        <title>Expression and regulation of a silent operon, hyf, coding for hydrogenase 4 isoenzyme in Escherichia coli.</title>
        <authorList>
            <person name="Self W.T."/>
            <person name="Hasona A."/>
            <person name="Shanmugam K.T."/>
        </authorList>
    </citation>
    <scope>FUNCTION</scope>
    <source>
        <strain>K12</strain>
    </source>
</reference>